<gene>
    <name evidence="1" type="primary">rpoB</name>
    <name type="ordered locus">PSPTO_0619</name>
</gene>
<dbReference type="EC" id="2.7.7.6" evidence="1"/>
<dbReference type="EMBL" id="AE016853">
    <property type="protein sequence ID" value="AAO54161.1"/>
    <property type="molecule type" value="Genomic_DNA"/>
</dbReference>
<dbReference type="RefSeq" id="NP_790466.1">
    <property type="nucleotide sequence ID" value="NC_004578.1"/>
</dbReference>
<dbReference type="RefSeq" id="WP_011103220.1">
    <property type="nucleotide sequence ID" value="NC_004578.1"/>
</dbReference>
<dbReference type="SMR" id="Q889X8"/>
<dbReference type="STRING" id="223283.PSPTO_0619"/>
<dbReference type="GeneID" id="1182239"/>
<dbReference type="KEGG" id="pst:PSPTO_0619"/>
<dbReference type="PATRIC" id="fig|223283.9.peg.625"/>
<dbReference type="eggNOG" id="COG0085">
    <property type="taxonomic scope" value="Bacteria"/>
</dbReference>
<dbReference type="HOGENOM" id="CLU_000524_4_0_6"/>
<dbReference type="OrthoDB" id="9803954at2"/>
<dbReference type="PhylomeDB" id="Q889X8"/>
<dbReference type="Proteomes" id="UP000002515">
    <property type="component" value="Chromosome"/>
</dbReference>
<dbReference type="GO" id="GO:0000428">
    <property type="term" value="C:DNA-directed RNA polymerase complex"/>
    <property type="evidence" value="ECO:0007669"/>
    <property type="project" value="UniProtKB-KW"/>
</dbReference>
<dbReference type="GO" id="GO:0003677">
    <property type="term" value="F:DNA binding"/>
    <property type="evidence" value="ECO:0007669"/>
    <property type="project" value="UniProtKB-UniRule"/>
</dbReference>
<dbReference type="GO" id="GO:0003899">
    <property type="term" value="F:DNA-directed RNA polymerase activity"/>
    <property type="evidence" value="ECO:0007669"/>
    <property type="project" value="UniProtKB-UniRule"/>
</dbReference>
<dbReference type="GO" id="GO:0032549">
    <property type="term" value="F:ribonucleoside binding"/>
    <property type="evidence" value="ECO:0007669"/>
    <property type="project" value="InterPro"/>
</dbReference>
<dbReference type="GO" id="GO:0006351">
    <property type="term" value="P:DNA-templated transcription"/>
    <property type="evidence" value="ECO:0007669"/>
    <property type="project" value="UniProtKB-UniRule"/>
</dbReference>
<dbReference type="CDD" id="cd00653">
    <property type="entry name" value="RNA_pol_B_RPB2"/>
    <property type="match status" value="1"/>
</dbReference>
<dbReference type="FunFam" id="2.40.50.100:FF:000006">
    <property type="entry name" value="DNA-directed RNA polymerase subunit beta"/>
    <property type="match status" value="1"/>
</dbReference>
<dbReference type="FunFam" id="2.40.50.150:FF:000001">
    <property type="entry name" value="DNA-directed RNA polymerase subunit beta"/>
    <property type="match status" value="1"/>
</dbReference>
<dbReference type="FunFam" id="3.90.1110.10:FF:000001">
    <property type="entry name" value="DNA-directed RNA polymerase subunit beta"/>
    <property type="match status" value="1"/>
</dbReference>
<dbReference type="FunFam" id="3.90.1110.10:FF:000004">
    <property type="entry name" value="DNA-directed RNA polymerase subunit beta"/>
    <property type="match status" value="1"/>
</dbReference>
<dbReference type="FunFam" id="3.90.1800.10:FF:000001">
    <property type="entry name" value="DNA-directed RNA polymerase subunit beta"/>
    <property type="match status" value="1"/>
</dbReference>
<dbReference type="Gene3D" id="2.40.50.100">
    <property type="match status" value="1"/>
</dbReference>
<dbReference type="Gene3D" id="2.40.50.150">
    <property type="match status" value="1"/>
</dbReference>
<dbReference type="Gene3D" id="3.90.1100.10">
    <property type="match status" value="2"/>
</dbReference>
<dbReference type="Gene3D" id="2.30.150.10">
    <property type="entry name" value="DNA-directed RNA polymerase, beta subunit, external 1 domain"/>
    <property type="match status" value="1"/>
</dbReference>
<dbReference type="Gene3D" id="2.40.270.10">
    <property type="entry name" value="DNA-directed RNA polymerase, subunit 2, domain 6"/>
    <property type="match status" value="1"/>
</dbReference>
<dbReference type="Gene3D" id="3.90.1800.10">
    <property type="entry name" value="RNA polymerase alpha subunit dimerisation domain"/>
    <property type="match status" value="1"/>
</dbReference>
<dbReference type="Gene3D" id="3.90.1110.10">
    <property type="entry name" value="RNA polymerase Rpb2, domain 2"/>
    <property type="match status" value="1"/>
</dbReference>
<dbReference type="HAMAP" id="MF_01321">
    <property type="entry name" value="RNApol_bact_RpoB"/>
    <property type="match status" value="1"/>
</dbReference>
<dbReference type="InterPro" id="IPR042107">
    <property type="entry name" value="DNA-dir_RNA_pol_bsu_ext_1_sf"/>
</dbReference>
<dbReference type="InterPro" id="IPR019462">
    <property type="entry name" value="DNA-dir_RNA_pol_bsu_external_1"/>
</dbReference>
<dbReference type="InterPro" id="IPR015712">
    <property type="entry name" value="DNA-dir_RNA_pol_su2"/>
</dbReference>
<dbReference type="InterPro" id="IPR007120">
    <property type="entry name" value="DNA-dir_RNAP_su2_dom"/>
</dbReference>
<dbReference type="InterPro" id="IPR037033">
    <property type="entry name" value="DNA-dir_RNAP_su2_hyb_sf"/>
</dbReference>
<dbReference type="InterPro" id="IPR010243">
    <property type="entry name" value="RNA_pol_bsu_bac"/>
</dbReference>
<dbReference type="InterPro" id="IPR007121">
    <property type="entry name" value="RNA_pol_bsu_CS"/>
</dbReference>
<dbReference type="InterPro" id="IPR007644">
    <property type="entry name" value="RNA_pol_bsu_protrusion"/>
</dbReference>
<dbReference type="InterPro" id="IPR007642">
    <property type="entry name" value="RNA_pol_Rpb2_2"/>
</dbReference>
<dbReference type="InterPro" id="IPR037034">
    <property type="entry name" value="RNA_pol_Rpb2_2_sf"/>
</dbReference>
<dbReference type="InterPro" id="IPR007645">
    <property type="entry name" value="RNA_pol_Rpb2_3"/>
</dbReference>
<dbReference type="InterPro" id="IPR007641">
    <property type="entry name" value="RNA_pol_Rpb2_7"/>
</dbReference>
<dbReference type="InterPro" id="IPR014724">
    <property type="entry name" value="RNA_pol_RPB2_OB-fold"/>
</dbReference>
<dbReference type="NCBIfam" id="NF001616">
    <property type="entry name" value="PRK00405.1"/>
    <property type="match status" value="1"/>
</dbReference>
<dbReference type="NCBIfam" id="TIGR02013">
    <property type="entry name" value="rpoB"/>
    <property type="match status" value="1"/>
</dbReference>
<dbReference type="PANTHER" id="PTHR20856">
    <property type="entry name" value="DNA-DIRECTED RNA POLYMERASE I SUBUNIT 2"/>
    <property type="match status" value="1"/>
</dbReference>
<dbReference type="Pfam" id="PF04563">
    <property type="entry name" value="RNA_pol_Rpb2_1"/>
    <property type="match status" value="1"/>
</dbReference>
<dbReference type="Pfam" id="PF04561">
    <property type="entry name" value="RNA_pol_Rpb2_2"/>
    <property type="match status" value="2"/>
</dbReference>
<dbReference type="Pfam" id="PF04565">
    <property type="entry name" value="RNA_pol_Rpb2_3"/>
    <property type="match status" value="1"/>
</dbReference>
<dbReference type="Pfam" id="PF10385">
    <property type="entry name" value="RNA_pol_Rpb2_45"/>
    <property type="match status" value="1"/>
</dbReference>
<dbReference type="Pfam" id="PF00562">
    <property type="entry name" value="RNA_pol_Rpb2_6"/>
    <property type="match status" value="1"/>
</dbReference>
<dbReference type="Pfam" id="PF04560">
    <property type="entry name" value="RNA_pol_Rpb2_7"/>
    <property type="match status" value="1"/>
</dbReference>
<dbReference type="SUPFAM" id="SSF64484">
    <property type="entry name" value="beta and beta-prime subunits of DNA dependent RNA-polymerase"/>
    <property type="match status" value="1"/>
</dbReference>
<dbReference type="PROSITE" id="PS01166">
    <property type="entry name" value="RNA_POL_BETA"/>
    <property type="match status" value="1"/>
</dbReference>
<proteinExistence type="inferred from homology"/>
<evidence type="ECO:0000255" key="1">
    <source>
        <dbReference type="HAMAP-Rule" id="MF_01321"/>
    </source>
</evidence>
<reference key="1">
    <citation type="journal article" date="2003" name="Proc. Natl. Acad. Sci. U.S.A.">
        <title>The complete genome sequence of the Arabidopsis and tomato pathogen Pseudomonas syringae pv. tomato DC3000.</title>
        <authorList>
            <person name="Buell C.R."/>
            <person name="Joardar V."/>
            <person name="Lindeberg M."/>
            <person name="Selengut J."/>
            <person name="Paulsen I.T."/>
            <person name="Gwinn M.L."/>
            <person name="Dodson R.J."/>
            <person name="DeBoy R.T."/>
            <person name="Durkin A.S."/>
            <person name="Kolonay J.F."/>
            <person name="Madupu R."/>
            <person name="Daugherty S.C."/>
            <person name="Brinkac L.M."/>
            <person name="Beanan M.J."/>
            <person name="Haft D.H."/>
            <person name="Nelson W.C."/>
            <person name="Davidsen T.M."/>
            <person name="Zafar N."/>
            <person name="Zhou L."/>
            <person name="Liu J."/>
            <person name="Yuan Q."/>
            <person name="Khouri H.M."/>
            <person name="Fedorova N.B."/>
            <person name="Tran B."/>
            <person name="Russell D."/>
            <person name="Berry K.J."/>
            <person name="Utterback T.R."/>
            <person name="Van Aken S.E."/>
            <person name="Feldblyum T.V."/>
            <person name="D'Ascenzo M."/>
            <person name="Deng W.-L."/>
            <person name="Ramos A.R."/>
            <person name="Alfano J.R."/>
            <person name="Cartinhour S."/>
            <person name="Chatterjee A.K."/>
            <person name="Delaney T.P."/>
            <person name="Lazarowitz S.G."/>
            <person name="Martin G.B."/>
            <person name="Schneider D.J."/>
            <person name="Tang X."/>
            <person name="Bender C.L."/>
            <person name="White O."/>
            <person name="Fraser C.M."/>
            <person name="Collmer A."/>
        </authorList>
    </citation>
    <scope>NUCLEOTIDE SEQUENCE [LARGE SCALE GENOMIC DNA]</scope>
    <source>
        <strain>ATCC BAA-871 / DC3000</strain>
    </source>
</reference>
<protein>
    <recommendedName>
        <fullName evidence="1">DNA-directed RNA polymerase subunit beta</fullName>
        <shortName evidence="1">RNAP subunit beta</shortName>
        <ecNumber evidence="1">2.7.7.6</ecNumber>
    </recommendedName>
    <alternativeName>
        <fullName evidence="1">RNA polymerase subunit beta</fullName>
    </alternativeName>
    <alternativeName>
        <fullName evidence="1">Transcriptase subunit beta</fullName>
    </alternativeName>
</protein>
<keyword id="KW-0240">DNA-directed RNA polymerase</keyword>
<keyword id="KW-0548">Nucleotidyltransferase</keyword>
<keyword id="KW-1185">Reference proteome</keyword>
<keyword id="KW-0804">Transcription</keyword>
<keyword id="KW-0808">Transferase</keyword>
<name>RPOB_PSESM</name>
<comment type="function">
    <text evidence="1">DNA-dependent RNA polymerase catalyzes the transcription of DNA into RNA using the four ribonucleoside triphosphates as substrates.</text>
</comment>
<comment type="catalytic activity">
    <reaction evidence="1">
        <text>RNA(n) + a ribonucleoside 5'-triphosphate = RNA(n+1) + diphosphate</text>
        <dbReference type="Rhea" id="RHEA:21248"/>
        <dbReference type="Rhea" id="RHEA-COMP:14527"/>
        <dbReference type="Rhea" id="RHEA-COMP:17342"/>
        <dbReference type="ChEBI" id="CHEBI:33019"/>
        <dbReference type="ChEBI" id="CHEBI:61557"/>
        <dbReference type="ChEBI" id="CHEBI:140395"/>
        <dbReference type="EC" id="2.7.7.6"/>
    </reaction>
</comment>
<comment type="subunit">
    <text evidence="1">The RNAP catalytic core consists of 2 alpha, 1 beta, 1 beta' and 1 omega subunit. When a sigma factor is associated with the core the holoenzyme is formed, which can initiate transcription.</text>
</comment>
<comment type="similarity">
    <text evidence="1">Belongs to the RNA polymerase beta chain family.</text>
</comment>
<accession>Q889X8</accession>
<organism>
    <name type="scientific">Pseudomonas syringae pv. tomato (strain ATCC BAA-871 / DC3000)</name>
    <dbReference type="NCBI Taxonomy" id="223283"/>
    <lineage>
        <taxon>Bacteria</taxon>
        <taxon>Pseudomonadati</taxon>
        <taxon>Pseudomonadota</taxon>
        <taxon>Gammaproteobacteria</taxon>
        <taxon>Pseudomonadales</taxon>
        <taxon>Pseudomonadaceae</taxon>
        <taxon>Pseudomonas</taxon>
    </lineage>
</organism>
<feature type="chain" id="PRO_0000047943" description="DNA-directed RNA polymerase subunit beta">
    <location>
        <begin position="1"/>
        <end position="1357"/>
    </location>
</feature>
<sequence length="1357" mass="151045">MAYSYTEKKRIRKDFSKLPDVMDVPYLLAIQLDSYREFLQAGATKDQFRDVGLHAAFKSVFPIISYSGNAALEYVGYRLGEPAFDVKECVLRGVTYAVPLRVKVRLIIFDKESSNKAIKDIKEQEVYMGEIPLMTENGTFVINGTERVIVSQLHRSPGVFFDHDRGKTHSSGKLLYSARIIPYRGSWLDFEFDPKDCVFVRIDRRRKLPASVLLRALGYTTEQVLDAFYTTNVFHVRGENLNLELVPQRLRGEIAVLDILDDKGKVIVEQGRRITARHINQLEKAGIKELEVPLDYVLGRTTAKVIVHPATGEIIAECNTELNTEILGKIAKAQVVRIETLYTNDIDCGPFVSDTLKIDSTSNQLEALVEIYRMMRPGEPPTKDAAETLFNNLFFSPERYDLSAVGRMKFNRRIGRTEIEGSGVLCKEDIVAVLKTLVDIRNGKGIVDDIDHLGNRRVRCVGEMAENQFRVGLVRVERAVKERLSMAESEGLMPQDLINAKPVAAAVKEFFGSSQLSQFMDQNNPLSEITCKRRVSALGPGGLTRERAGFEVRDVHPTHYGRVCPIETPEGPNIGLINSLAAYARTNQYGFLESPYRVVKEGLVTDEIVFLSAIEEADHVIAQASAAMNDKQELIDELVAVRHLNEFTVKAPADVTLMDVSPKQVVSVAASLIPFLEHDDANRALMGSNMQRQAVPTLRADKPLVGTGMERNVARDSGVCVVARRGGVIDSVDASRIVVRVADDEVETGEAGVDIYNLTKYTRSNQNTCINQRPLVSKGDRVQRSDIMADGPSTDMGELALGQNMRIAFMAWNGFNFEDSICLSERVVQEDRFTTIHIQELTCVARDTKLGPEEITADIPNVGEAALNKLDEAGIVYVGAEVGAGDILVGKVTPKGETQLTPEEKLLRAIFGEKASDVKDTSLRVPTGTKGTVIDVQVFTRDGVERDARALSIEKSQLDEIRKDLNEEFRIVEGATFERLRSALVGRVAEGGAGLKKGQEITNEVLDGLEHGQWFKLRMAEDALNEQLEKAQAYIVDRRRLLDDKFEDKKRKLQQGDDLAPGVLKIVKVYLAIRRRIQPGDKMAGRHGNKGVVSVIMPVEDMPHDANGTPVDIVLNPLGVPSRMNVGQILETHLGLAAKGLGEKINRMLEEQRKVIELRKFLNEIYNEIGGRQEALEDLTDNEILDLAKNLRNGVPMATPVFDGAKESEIKAMLKLADMPESGQMQLFDGRTGNKFERPVTVGYMYMLKLNHLVDDKMHARSTGSYSLVTQQPLGGKAQFGGQRFGEMEVWALEAYGAAYTLQEMLTVKSDDVNGRTKMYKNIVDGDHRMEPGMPESFNVLIKEIRSLGIDIDLETE</sequence>